<name>RL30_RHOJR</name>
<feature type="chain" id="PRO_1000056099" description="Large ribosomal subunit protein uL30">
    <location>
        <begin position="1"/>
        <end position="59"/>
    </location>
</feature>
<evidence type="ECO:0000255" key="1">
    <source>
        <dbReference type="HAMAP-Rule" id="MF_01371"/>
    </source>
</evidence>
<evidence type="ECO:0000305" key="2"/>
<keyword id="KW-0687">Ribonucleoprotein</keyword>
<keyword id="KW-0689">Ribosomal protein</keyword>
<reference key="1">
    <citation type="journal article" date="2006" name="Proc. Natl. Acad. Sci. U.S.A.">
        <title>The complete genome of Rhodococcus sp. RHA1 provides insights into a catabolic powerhouse.</title>
        <authorList>
            <person name="McLeod M.P."/>
            <person name="Warren R.L."/>
            <person name="Hsiao W.W.L."/>
            <person name="Araki N."/>
            <person name="Myhre M."/>
            <person name="Fernandes C."/>
            <person name="Miyazawa D."/>
            <person name="Wong W."/>
            <person name="Lillquist A.L."/>
            <person name="Wang D."/>
            <person name="Dosanjh M."/>
            <person name="Hara H."/>
            <person name="Petrescu A."/>
            <person name="Morin R.D."/>
            <person name="Yang G."/>
            <person name="Stott J.M."/>
            <person name="Schein J.E."/>
            <person name="Shin H."/>
            <person name="Smailus D."/>
            <person name="Siddiqui A.S."/>
            <person name="Marra M.A."/>
            <person name="Jones S.J.M."/>
            <person name="Holt R."/>
            <person name="Brinkman F.S.L."/>
            <person name="Miyauchi K."/>
            <person name="Fukuda M."/>
            <person name="Davies J.E."/>
            <person name="Mohn W.W."/>
            <person name="Eltis L.D."/>
        </authorList>
    </citation>
    <scope>NUCLEOTIDE SEQUENCE [LARGE SCALE GENOMIC DNA]</scope>
    <source>
        <strain>RHA1</strain>
    </source>
</reference>
<accession>Q0S3F8</accession>
<gene>
    <name evidence="1" type="primary">rpmD</name>
    <name type="ordered locus">RHA1_ro06151</name>
</gene>
<sequence length="59" mass="6655">MAELKVTQIKSTIGTKQNQRNSLRTLGLKGIRQTVVREDNAQNRGLINVVRHLVTVEEV</sequence>
<dbReference type="EMBL" id="CP000431">
    <property type="protein sequence ID" value="ABG97928.1"/>
    <property type="molecule type" value="Genomic_DNA"/>
</dbReference>
<dbReference type="RefSeq" id="WP_005253859.1">
    <property type="nucleotide sequence ID" value="NC_008268.1"/>
</dbReference>
<dbReference type="SMR" id="Q0S3F8"/>
<dbReference type="KEGG" id="rha:RHA1_ro06151"/>
<dbReference type="eggNOG" id="COG1841">
    <property type="taxonomic scope" value="Bacteria"/>
</dbReference>
<dbReference type="HOGENOM" id="CLU_131047_2_0_11"/>
<dbReference type="OrthoDB" id="9812790at2"/>
<dbReference type="Proteomes" id="UP000008710">
    <property type="component" value="Chromosome"/>
</dbReference>
<dbReference type="GO" id="GO:0022625">
    <property type="term" value="C:cytosolic large ribosomal subunit"/>
    <property type="evidence" value="ECO:0007669"/>
    <property type="project" value="TreeGrafter"/>
</dbReference>
<dbReference type="GO" id="GO:0003735">
    <property type="term" value="F:structural constituent of ribosome"/>
    <property type="evidence" value="ECO:0007669"/>
    <property type="project" value="InterPro"/>
</dbReference>
<dbReference type="GO" id="GO:0006412">
    <property type="term" value="P:translation"/>
    <property type="evidence" value="ECO:0007669"/>
    <property type="project" value="UniProtKB-UniRule"/>
</dbReference>
<dbReference type="CDD" id="cd01658">
    <property type="entry name" value="Ribosomal_L30"/>
    <property type="match status" value="1"/>
</dbReference>
<dbReference type="FunFam" id="3.30.1390.20:FF:000001">
    <property type="entry name" value="50S ribosomal protein L30"/>
    <property type="match status" value="1"/>
</dbReference>
<dbReference type="Gene3D" id="3.30.1390.20">
    <property type="entry name" value="Ribosomal protein L30, ferredoxin-like fold domain"/>
    <property type="match status" value="1"/>
</dbReference>
<dbReference type="HAMAP" id="MF_01371_B">
    <property type="entry name" value="Ribosomal_uL30_B"/>
    <property type="match status" value="1"/>
</dbReference>
<dbReference type="InterPro" id="IPR036919">
    <property type="entry name" value="Ribo_uL30_ferredoxin-like_sf"/>
</dbReference>
<dbReference type="InterPro" id="IPR005996">
    <property type="entry name" value="Ribosomal_uL30_bac-type"/>
</dbReference>
<dbReference type="InterPro" id="IPR018038">
    <property type="entry name" value="Ribosomal_uL30_CS"/>
</dbReference>
<dbReference type="InterPro" id="IPR016082">
    <property type="entry name" value="Ribosomal_uL30_ferredoxin-like"/>
</dbReference>
<dbReference type="NCBIfam" id="TIGR01308">
    <property type="entry name" value="rpmD_bact"/>
    <property type="match status" value="1"/>
</dbReference>
<dbReference type="PANTHER" id="PTHR15892:SF2">
    <property type="entry name" value="LARGE RIBOSOMAL SUBUNIT PROTEIN UL30M"/>
    <property type="match status" value="1"/>
</dbReference>
<dbReference type="PANTHER" id="PTHR15892">
    <property type="entry name" value="MITOCHONDRIAL RIBOSOMAL PROTEIN L30"/>
    <property type="match status" value="1"/>
</dbReference>
<dbReference type="Pfam" id="PF00327">
    <property type="entry name" value="Ribosomal_L30"/>
    <property type="match status" value="1"/>
</dbReference>
<dbReference type="PIRSF" id="PIRSF002211">
    <property type="entry name" value="Ribosomal_L30_bac-type"/>
    <property type="match status" value="1"/>
</dbReference>
<dbReference type="SUPFAM" id="SSF55129">
    <property type="entry name" value="Ribosomal protein L30p/L7e"/>
    <property type="match status" value="1"/>
</dbReference>
<dbReference type="PROSITE" id="PS00634">
    <property type="entry name" value="RIBOSOMAL_L30"/>
    <property type="match status" value="1"/>
</dbReference>
<organism>
    <name type="scientific">Rhodococcus jostii (strain RHA1)</name>
    <dbReference type="NCBI Taxonomy" id="101510"/>
    <lineage>
        <taxon>Bacteria</taxon>
        <taxon>Bacillati</taxon>
        <taxon>Actinomycetota</taxon>
        <taxon>Actinomycetes</taxon>
        <taxon>Mycobacteriales</taxon>
        <taxon>Nocardiaceae</taxon>
        <taxon>Rhodococcus</taxon>
    </lineage>
</organism>
<comment type="subunit">
    <text evidence="1">Part of the 50S ribosomal subunit.</text>
</comment>
<comment type="similarity">
    <text evidence="1">Belongs to the universal ribosomal protein uL30 family.</text>
</comment>
<proteinExistence type="inferred from homology"/>
<protein>
    <recommendedName>
        <fullName evidence="1">Large ribosomal subunit protein uL30</fullName>
    </recommendedName>
    <alternativeName>
        <fullName evidence="2">50S ribosomal protein L30</fullName>
    </alternativeName>
</protein>